<organism>
    <name type="scientific">Clostridium botulinum (strain Alaska E43 / Type E3)</name>
    <dbReference type="NCBI Taxonomy" id="508767"/>
    <lineage>
        <taxon>Bacteria</taxon>
        <taxon>Bacillati</taxon>
        <taxon>Bacillota</taxon>
        <taxon>Clostridia</taxon>
        <taxon>Eubacteriales</taxon>
        <taxon>Clostridiaceae</taxon>
        <taxon>Clostridium</taxon>
    </lineage>
</organism>
<reference key="1">
    <citation type="submission" date="2008-05" db="EMBL/GenBank/DDBJ databases">
        <title>Complete genome sequence of Clostridium botulinum E3 str. Alaska E43.</title>
        <authorList>
            <person name="Brinkac L.M."/>
            <person name="Brown J.L."/>
            <person name="Bruce D."/>
            <person name="Detter C."/>
            <person name="Munk C."/>
            <person name="Smith L.A."/>
            <person name="Smith T.J."/>
            <person name="Sutton G."/>
            <person name="Brettin T.S."/>
        </authorList>
    </citation>
    <scope>NUCLEOTIDE SEQUENCE [LARGE SCALE GENOMIC DNA]</scope>
    <source>
        <strain>Alaska E43 / Type E3</strain>
    </source>
</reference>
<sequence>MHKDGVLIKGNREGINATIDMEKFSSFEDMLNMLIKKLSKGKHFYKGTTLILNINLSLIKKNDIKKLKESLLNEIELNEIIFEQLELEEESNKQTKIFNGVYEGKTKFIRRTVRSGQCLNYPGNIVIIGDVNSGAEVHAGGNIIVLGSLKGSVNAGNTGNKKSIIAAFLLEPEILKIADVITISPDGLEKPKYPEIAKVKDGTIIVEPYLANKYI</sequence>
<protein>
    <recommendedName>
        <fullName evidence="1">Probable septum site-determining protein MinC</fullName>
    </recommendedName>
</protein>
<name>MINC_CLOBA</name>
<dbReference type="EMBL" id="CP001078">
    <property type="protein sequence ID" value="ACD53179.1"/>
    <property type="molecule type" value="Genomic_DNA"/>
</dbReference>
<dbReference type="RefSeq" id="WP_012451137.1">
    <property type="nucleotide sequence ID" value="NC_010723.1"/>
</dbReference>
<dbReference type="SMR" id="B2V095"/>
<dbReference type="KEGG" id="cbt:CLH_0552"/>
<dbReference type="HOGENOM" id="CLU_048711_2_0_9"/>
<dbReference type="GO" id="GO:0000902">
    <property type="term" value="P:cell morphogenesis"/>
    <property type="evidence" value="ECO:0007669"/>
    <property type="project" value="InterPro"/>
</dbReference>
<dbReference type="GO" id="GO:0000917">
    <property type="term" value="P:division septum assembly"/>
    <property type="evidence" value="ECO:0007669"/>
    <property type="project" value="UniProtKB-KW"/>
</dbReference>
<dbReference type="GO" id="GO:1901891">
    <property type="term" value="P:regulation of cell septum assembly"/>
    <property type="evidence" value="ECO:0007669"/>
    <property type="project" value="InterPro"/>
</dbReference>
<dbReference type="Gene3D" id="2.160.20.70">
    <property type="match status" value="1"/>
</dbReference>
<dbReference type="HAMAP" id="MF_00267">
    <property type="entry name" value="MinC"/>
    <property type="match status" value="1"/>
</dbReference>
<dbReference type="InterPro" id="IPR016098">
    <property type="entry name" value="CAP/MinC_C"/>
</dbReference>
<dbReference type="InterPro" id="IPR013033">
    <property type="entry name" value="MinC"/>
</dbReference>
<dbReference type="InterPro" id="IPR036145">
    <property type="entry name" value="MinC_C_sf"/>
</dbReference>
<dbReference type="InterPro" id="IPR055219">
    <property type="entry name" value="MinC_N_1"/>
</dbReference>
<dbReference type="InterPro" id="IPR005526">
    <property type="entry name" value="Septum_form_inhib_MinC_C"/>
</dbReference>
<dbReference type="NCBIfam" id="TIGR01222">
    <property type="entry name" value="minC"/>
    <property type="match status" value="1"/>
</dbReference>
<dbReference type="NCBIfam" id="NF001775">
    <property type="entry name" value="PRK00513.1-6"/>
    <property type="match status" value="1"/>
</dbReference>
<dbReference type="PANTHER" id="PTHR34108">
    <property type="entry name" value="SEPTUM SITE-DETERMINING PROTEIN MINC"/>
    <property type="match status" value="1"/>
</dbReference>
<dbReference type="PANTHER" id="PTHR34108:SF1">
    <property type="entry name" value="SEPTUM SITE-DETERMINING PROTEIN MINC"/>
    <property type="match status" value="1"/>
</dbReference>
<dbReference type="Pfam" id="PF03775">
    <property type="entry name" value="MinC_C"/>
    <property type="match status" value="1"/>
</dbReference>
<dbReference type="Pfam" id="PF22642">
    <property type="entry name" value="MinC_N_1"/>
    <property type="match status" value="1"/>
</dbReference>
<dbReference type="SUPFAM" id="SSF63848">
    <property type="entry name" value="Cell-division inhibitor MinC, C-terminal domain"/>
    <property type="match status" value="1"/>
</dbReference>
<keyword id="KW-0131">Cell cycle</keyword>
<keyword id="KW-0132">Cell division</keyword>
<keyword id="KW-0717">Septation</keyword>
<accession>B2V095</accession>
<gene>
    <name evidence="1" type="primary">minC</name>
    <name type="ordered locus">CLH_0552</name>
</gene>
<comment type="function">
    <text evidence="1">Cell division inhibitor that blocks the formation of polar Z ring septums. Rapidly oscillates between the poles of the cell to destabilize FtsZ filaments that have formed before they mature into polar Z rings. Prevents FtsZ polymerization.</text>
</comment>
<comment type="subunit">
    <text evidence="1">Interacts with MinD and FtsZ.</text>
</comment>
<comment type="similarity">
    <text evidence="1">Belongs to the MinC family.</text>
</comment>
<evidence type="ECO:0000255" key="1">
    <source>
        <dbReference type="HAMAP-Rule" id="MF_00267"/>
    </source>
</evidence>
<proteinExistence type="inferred from homology"/>
<feature type="chain" id="PRO_1000114275" description="Probable septum site-determining protein MinC">
    <location>
        <begin position="1"/>
        <end position="215"/>
    </location>
</feature>